<feature type="chain" id="PRO_0000178331" description="Small ribosomal subunit protein bS21">
    <location>
        <begin position="1"/>
        <end position="70"/>
    </location>
</feature>
<gene>
    <name evidence="1" type="primary">rpsU</name>
    <name type="ordered locus">DVU_1792</name>
</gene>
<accession>Q72B46</accession>
<protein>
    <recommendedName>
        <fullName evidence="1">Small ribosomal subunit protein bS21</fullName>
    </recommendedName>
    <alternativeName>
        <fullName evidence="2">30S ribosomal protein S21</fullName>
    </alternativeName>
</protein>
<proteinExistence type="inferred from homology"/>
<organism>
    <name type="scientific">Nitratidesulfovibrio vulgaris (strain ATCC 29579 / DSM 644 / CCUG 34227 / NCIMB 8303 / VKM B-1760 / Hildenborough)</name>
    <name type="common">Desulfovibrio vulgaris</name>
    <dbReference type="NCBI Taxonomy" id="882"/>
    <lineage>
        <taxon>Bacteria</taxon>
        <taxon>Pseudomonadati</taxon>
        <taxon>Thermodesulfobacteriota</taxon>
        <taxon>Desulfovibrionia</taxon>
        <taxon>Desulfovibrionales</taxon>
        <taxon>Desulfovibrionaceae</taxon>
        <taxon>Nitratidesulfovibrio</taxon>
    </lineage>
</organism>
<comment type="similarity">
    <text evidence="1">Belongs to the bacterial ribosomal protein bS21 family.</text>
</comment>
<name>RS21_NITV2</name>
<keyword id="KW-1185">Reference proteome</keyword>
<keyword id="KW-0687">Ribonucleoprotein</keyword>
<keyword id="KW-0689">Ribosomal protein</keyword>
<dbReference type="EMBL" id="AE017285">
    <property type="protein sequence ID" value="AAS96269.1"/>
    <property type="molecule type" value="Genomic_DNA"/>
</dbReference>
<dbReference type="SMR" id="Q72B46"/>
<dbReference type="STRING" id="882.DVU_1792"/>
<dbReference type="PaxDb" id="882-DVU_1792"/>
<dbReference type="EnsemblBacteria" id="AAS96269">
    <property type="protein sequence ID" value="AAS96269"/>
    <property type="gene ID" value="DVU_1792"/>
</dbReference>
<dbReference type="KEGG" id="dvu:DVU_1792"/>
<dbReference type="eggNOG" id="COG0828">
    <property type="taxonomic scope" value="Bacteria"/>
</dbReference>
<dbReference type="HOGENOM" id="CLU_159258_3_0_7"/>
<dbReference type="PhylomeDB" id="Q72B46"/>
<dbReference type="Proteomes" id="UP000002194">
    <property type="component" value="Chromosome"/>
</dbReference>
<dbReference type="GO" id="GO:1990904">
    <property type="term" value="C:ribonucleoprotein complex"/>
    <property type="evidence" value="ECO:0007669"/>
    <property type="project" value="UniProtKB-KW"/>
</dbReference>
<dbReference type="GO" id="GO:0005840">
    <property type="term" value="C:ribosome"/>
    <property type="evidence" value="ECO:0007669"/>
    <property type="project" value="UniProtKB-KW"/>
</dbReference>
<dbReference type="GO" id="GO:0003735">
    <property type="term" value="F:structural constituent of ribosome"/>
    <property type="evidence" value="ECO:0007669"/>
    <property type="project" value="InterPro"/>
</dbReference>
<dbReference type="GO" id="GO:0006412">
    <property type="term" value="P:translation"/>
    <property type="evidence" value="ECO:0007669"/>
    <property type="project" value="UniProtKB-UniRule"/>
</dbReference>
<dbReference type="Gene3D" id="1.20.5.1150">
    <property type="entry name" value="Ribosomal protein S8"/>
    <property type="match status" value="1"/>
</dbReference>
<dbReference type="HAMAP" id="MF_00358">
    <property type="entry name" value="Ribosomal_bS21"/>
    <property type="match status" value="1"/>
</dbReference>
<dbReference type="InterPro" id="IPR001911">
    <property type="entry name" value="Ribosomal_bS21"/>
</dbReference>
<dbReference type="InterPro" id="IPR018278">
    <property type="entry name" value="Ribosomal_bS21_CS"/>
</dbReference>
<dbReference type="InterPro" id="IPR038380">
    <property type="entry name" value="Ribosomal_bS21_sf"/>
</dbReference>
<dbReference type="NCBIfam" id="TIGR00030">
    <property type="entry name" value="S21p"/>
    <property type="match status" value="1"/>
</dbReference>
<dbReference type="PANTHER" id="PTHR21109">
    <property type="entry name" value="MITOCHONDRIAL 28S RIBOSOMAL PROTEIN S21"/>
    <property type="match status" value="1"/>
</dbReference>
<dbReference type="PANTHER" id="PTHR21109:SF22">
    <property type="entry name" value="SMALL RIBOSOMAL SUBUNIT PROTEIN BS21"/>
    <property type="match status" value="1"/>
</dbReference>
<dbReference type="Pfam" id="PF01165">
    <property type="entry name" value="Ribosomal_S21"/>
    <property type="match status" value="1"/>
</dbReference>
<dbReference type="PRINTS" id="PR00976">
    <property type="entry name" value="RIBOSOMALS21"/>
</dbReference>
<dbReference type="PROSITE" id="PS01181">
    <property type="entry name" value="RIBOSOMAL_S21"/>
    <property type="match status" value="1"/>
</dbReference>
<evidence type="ECO:0000255" key="1">
    <source>
        <dbReference type="HAMAP-Rule" id="MF_00358"/>
    </source>
</evidence>
<evidence type="ECO:0000305" key="2"/>
<reference key="1">
    <citation type="journal article" date="2004" name="Nat. Biotechnol.">
        <title>The genome sequence of the anaerobic, sulfate-reducing bacterium Desulfovibrio vulgaris Hildenborough.</title>
        <authorList>
            <person name="Heidelberg J.F."/>
            <person name="Seshadri R."/>
            <person name="Haveman S.A."/>
            <person name="Hemme C.L."/>
            <person name="Paulsen I.T."/>
            <person name="Kolonay J.F."/>
            <person name="Eisen J.A."/>
            <person name="Ward N.L."/>
            <person name="Methe B.A."/>
            <person name="Brinkac L.M."/>
            <person name="Daugherty S.C."/>
            <person name="DeBoy R.T."/>
            <person name="Dodson R.J."/>
            <person name="Durkin A.S."/>
            <person name="Madupu R."/>
            <person name="Nelson W.C."/>
            <person name="Sullivan S.A."/>
            <person name="Fouts D.E."/>
            <person name="Haft D.H."/>
            <person name="Selengut J."/>
            <person name="Peterson J.D."/>
            <person name="Davidsen T.M."/>
            <person name="Zafar N."/>
            <person name="Zhou L."/>
            <person name="Radune D."/>
            <person name="Dimitrov G."/>
            <person name="Hance M."/>
            <person name="Tran K."/>
            <person name="Khouri H.M."/>
            <person name="Gill J."/>
            <person name="Utterback T.R."/>
            <person name="Feldblyum T.V."/>
            <person name="Wall J.D."/>
            <person name="Voordouw G."/>
            <person name="Fraser C.M."/>
        </authorList>
    </citation>
    <scope>NUCLEOTIDE SEQUENCE [LARGE SCALE GENOMIC DNA]</scope>
    <source>
        <strain>ATCC 29579 / DSM 644 / CCUG 34227 / NCIMB 8303 / VKM B-1760 / Hildenborough</strain>
    </source>
</reference>
<sequence>MISLPGVYLNEDDYNFDIALRRFKKQVEKAGILSEMKKRQHYEKPSVMRKKKKAAARKRLLKKIRKMNMA</sequence>